<evidence type="ECO:0000255" key="1">
    <source>
        <dbReference type="HAMAP-Rule" id="MF_00401"/>
    </source>
</evidence>
<evidence type="ECO:0000305" key="2"/>
<sequence length="215" mass="24639">MKLLGEKFPSMEVMTTHGVKRLPEDYAGKWFVLFSHPADFTPVCTTEFVEFARKAEEFKQLNTELIGLSVDQVFSHIKWVEWIKDNTGVQIPFPVIADELGRVSNQLGMIHPGKGTNTVRAVFIVDDKGVIRLIMYYPQEVGRNVDEILRALKALQTADQYGVALPEKWPNNYLIKDHVIVPPSTDEASANERKEKIKAKEIEAFDWWFVHKPLK</sequence>
<feature type="chain" id="PRO_0000135178" description="Peroxiredoxin 1">
    <location>
        <begin position="1"/>
        <end position="215"/>
    </location>
</feature>
<feature type="domain" description="Thioredoxin" evidence="1">
    <location>
        <begin position="2"/>
        <end position="157"/>
    </location>
</feature>
<feature type="active site" description="Cysteine sulfenic acid (-SOH) intermediate" evidence="1">
    <location>
        <position position="44"/>
    </location>
</feature>
<feature type="binding site" evidence="1">
    <location>
        <position position="120"/>
    </location>
    <ligand>
        <name>substrate</name>
    </ligand>
</feature>
<name>TDXH1_CALS4</name>
<protein>
    <recommendedName>
        <fullName evidence="1">Peroxiredoxin 1</fullName>
        <ecNumber evidence="1">1.11.1.24</ecNumber>
    </recommendedName>
    <alternativeName>
        <fullName evidence="1">Thioredoxin-dependent peroxiredoxin 1</fullName>
    </alternativeName>
</protein>
<gene>
    <name type="ordered locus">TTE0270</name>
</gene>
<reference key="1">
    <citation type="journal article" date="2002" name="Genome Res.">
        <title>A complete sequence of the T. tengcongensis genome.</title>
        <authorList>
            <person name="Bao Q."/>
            <person name="Tian Y."/>
            <person name="Li W."/>
            <person name="Xu Z."/>
            <person name="Xuan Z."/>
            <person name="Hu S."/>
            <person name="Dong W."/>
            <person name="Yang J."/>
            <person name="Chen Y."/>
            <person name="Xue Y."/>
            <person name="Xu Y."/>
            <person name="Lai X."/>
            <person name="Huang L."/>
            <person name="Dong X."/>
            <person name="Ma Y."/>
            <person name="Ling L."/>
            <person name="Tan H."/>
            <person name="Chen R."/>
            <person name="Wang J."/>
            <person name="Yu J."/>
            <person name="Yang H."/>
        </authorList>
    </citation>
    <scope>NUCLEOTIDE SEQUENCE [LARGE SCALE GENOMIC DNA]</scope>
    <source>
        <strain>DSM 15242 / JCM 11007 / NBRC 100824 / MB4</strain>
    </source>
</reference>
<accession>Q8RCY5</accession>
<comment type="function">
    <text evidence="1">Thiol-specific peroxidase that catalyzes the reduction of hydrogen peroxide and organic hydroperoxides to water and alcohols, respectively. Plays a role in cell protection against oxidative stress by detoxifying peroxides.</text>
</comment>
<comment type="catalytic activity">
    <reaction evidence="1">
        <text>a hydroperoxide + [thioredoxin]-dithiol = an alcohol + [thioredoxin]-disulfide + H2O</text>
        <dbReference type="Rhea" id="RHEA:62620"/>
        <dbReference type="Rhea" id="RHEA-COMP:10698"/>
        <dbReference type="Rhea" id="RHEA-COMP:10700"/>
        <dbReference type="ChEBI" id="CHEBI:15377"/>
        <dbReference type="ChEBI" id="CHEBI:29950"/>
        <dbReference type="ChEBI" id="CHEBI:30879"/>
        <dbReference type="ChEBI" id="CHEBI:35924"/>
        <dbReference type="ChEBI" id="CHEBI:50058"/>
        <dbReference type="EC" id="1.11.1.24"/>
    </reaction>
</comment>
<comment type="subunit">
    <text evidence="1">Homodecamer. Pentamer of dimers that assemble into a ring structure.</text>
</comment>
<comment type="subcellular location">
    <subcellularLocation>
        <location evidence="1">Cytoplasm</location>
    </subcellularLocation>
</comment>
<comment type="miscellaneous">
    <text evidence="1">The active site is a conserved redox-active cysteine residue, the peroxidatic cysteine (C(P)), which makes the nucleophilic attack on the peroxide substrate. The peroxide oxidizes the C(P)-SH to cysteine sulfenic acid (C(P)-SOH), which then reacts with another cysteine residue, the resolving cysteine (C(R)), to form a disulfide bridge. The disulfide is subsequently reduced by an appropriate electron donor to complete the catalytic cycle. In this 1-Cys peroxiredoxin, no C(R) is present and C(P) instead forms a disulfide with a cysteine from another protein or with a small thiol molecule.</text>
</comment>
<comment type="similarity">
    <text evidence="1">Belongs to the peroxiredoxin family. Prx6 subfamily.</text>
</comment>
<comment type="sequence caution" evidence="2">
    <conflict type="erroneous initiation">
        <sequence resource="EMBL-CDS" id="AAM23566"/>
    </conflict>
</comment>
<organism>
    <name type="scientific">Caldanaerobacter subterraneus subsp. tengcongensis (strain DSM 15242 / JCM 11007 / NBRC 100824 / MB4)</name>
    <name type="common">Thermoanaerobacter tengcongensis</name>
    <dbReference type="NCBI Taxonomy" id="273068"/>
    <lineage>
        <taxon>Bacteria</taxon>
        <taxon>Bacillati</taxon>
        <taxon>Bacillota</taxon>
        <taxon>Clostridia</taxon>
        <taxon>Thermoanaerobacterales</taxon>
        <taxon>Thermoanaerobacteraceae</taxon>
        <taxon>Caldanaerobacter</taxon>
    </lineage>
</organism>
<proteinExistence type="inferred from homology"/>
<dbReference type="EC" id="1.11.1.24" evidence="1"/>
<dbReference type="EMBL" id="AE008691">
    <property type="protein sequence ID" value="AAM23566.1"/>
    <property type="status" value="ALT_INIT"/>
    <property type="molecule type" value="Genomic_DNA"/>
</dbReference>
<dbReference type="RefSeq" id="WP_009609986.1">
    <property type="nucleotide sequence ID" value="NZ_JANUCV010000001.1"/>
</dbReference>
<dbReference type="SMR" id="Q8RCY5"/>
<dbReference type="STRING" id="273068.TTE0270"/>
<dbReference type="KEGG" id="tte:TTE0270"/>
<dbReference type="eggNOG" id="COG0450">
    <property type="taxonomic scope" value="Bacteria"/>
</dbReference>
<dbReference type="HOGENOM" id="CLU_042529_4_4_9"/>
<dbReference type="OrthoDB" id="9812811at2"/>
<dbReference type="Proteomes" id="UP000000555">
    <property type="component" value="Chromosome"/>
</dbReference>
<dbReference type="GO" id="GO:0005829">
    <property type="term" value="C:cytosol"/>
    <property type="evidence" value="ECO:0007669"/>
    <property type="project" value="TreeGrafter"/>
</dbReference>
<dbReference type="GO" id="GO:0008379">
    <property type="term" value="F:thioredoxin peroxidase activity"/>
    <property type="evidence" value="ECO:0007669"/>
    <property type="project" value="TreeGrafter"/>
</dbReference>
<dbReference type="GO" id="GO:0045454">
    <property type="term" value="P:cell redox homeostasis"/>
    <property type="evidence" value="ECO:0007669"/>
    <property type="project" value="TreeGrafter"/>
</dbReference>
<dbReference type="GO" id="GO:0033554">
    <property type="term" value="P:cellular response to stress"/>
    <property type="evidence" value="ECO:0007669"/>
    <property type="project" value="TreeGrafter"/>
</dbReference>
<dbReference type="GO" id="GO:0042744">
    <property type="term" value="P:hydrogen peroxide catabolic process"/>
    <property type="evidence" value="ECO:0007669"/>
    <property type="project" value="TreeGrafter"/>
</dbReference>
<dbReference type="GO" id="GO:0006979">
    <property type="term" value="P:response to oxidative stress"/>
    <property type="evidence" value="ECO:0007669"/>
    <property type="project" value="TreeGrafter"/>
</dbReference>
<dbReference type="CDD" id="cd03016">
    <property type="entry name" value="PRX_1cys"/>
    <property type="match status" value="1"/>
</dbReference>
<dbReference type="FunFam" id="3.40.30.10:FF:000011">
    <property type="entry name" value="Peroxiredoxin PRX1"/>
    <property type="match status" value="1"/>
</dbReference>
<dbReference type="Gene3D" id="3.30.1020.10">
    <property type="entry name" value="Antioxidant, Horf6, Chain A, domain2"/>
    <property type="match status" value="1"/>
</dbReference>
<dbReference type="Gene3D" id="3.40.30.10">
    <property type="entry name" value="Glutaredoxin"/>
    <property type="match status" value="1"/>
</dbReference>
<dbReference type="HAMAP" id="MF_00401">
    <property type="entry name" value="Peroxiredoxin"/>
    <property type="match status" value="1"/>
</dbReference>
<dbReference type="InterPro" id="IPR000866">
    <property type="entry name" value="AhpC/TSA"/>
</dbReference>
<dbReference type="InterPro" id="IPR050217">
    <property type="entry name" value="Peroxiredoxin"/>
</dbReference>
<dbReference type="InterPro" id="IPR024706">
    <property type="entry name" value="Peroxiredoxin_AhpC-typ"/>
</dbReference>
<dbReference type="InterPro" id="IPR019479">
    <property type="entry name" value="Peroxiredoxin_C"/>
</dbReference>
<dbReference type="InterPro" id="IPR022915">
    <property type="entry name" value="Peroxiredoxin_TDXH"/>
</dbReference>
<dbReference type="InterPro" id="IPR045020">
    <property type="entry name" value="PRX_1cys"/>
</dbReference>
<dbReference type="InterPro" id="IPR036249">
    <property type="entry name" value="Thioredoxin-like_sf"/>
</dbReference>
<dbReference type="InterPro" id="IPR013766">
    <property type="entry name" value="Thioredoxin_domain"/>
</dbReference>
<dbReference type="NCBIfam" id="NF009668">
    <property type="entry name" value="PRK13189.1"/>
    <property type="match status" value="1"/>
</dbReference>
<dbReference type="NCBIfam" id="NF010122">
    <property type="entry name" value="PRK13599.1"/>
    <property type="match status" value="1"/>
</dbReference>
<dbReference type="PANTHER" id="PTHR10681">
    <property type="entry name" value="THIOREDOXIN PEROXIDASE"/>
    <property type="match status" value="1"/>
</dbReference>
<dbReference type="PANTHER" id="PTHR10681:SF128">
    <property type="entry name" value="THIOREDOXIN-DEPENDENT PEROXIDE REDUCTASE, MITOCHONDRIAL"/>
    <property type="match status" value="1"/>
</dbReference>
<dbReference type="Pfam" id="PF10417">
    <property type="entry name" value="1-cysPrx_C"/>
    <property type="match status" value="1"/>
</dbReference>
<dbReference type="Pfam" id="PF00578">
    <property type="entry name" value="AhpC-TSA"/>
    <property type="match status" value="1"/>
</dbReference>
<dbReference type="PIRSF" id="PIRSF000239">
    <property type="entry name" value="AHPC"/>
    <property type="match status" value="1"/>
</dbReference>
<dbReference type="SUPFAM" id="SSF52833">
    <property type="entry name" value="Thioredoxin-like"/>
    <property type="match status" value="1"/>
</dbReference>
<dbReference type="PROSITE" id="PS51352">
    <property type="entry name" value="THIOREDOXIN_2"/>
    <property type="match status" value="1"/>
</dbReference>
<keyword id="KW-0049">Antioxidant</keyword>
<keyword id="KW-0963">Cytoplasm</keyword>
<keyword id="KW-0560">Oxidoreductase</keyword>
<keyword id="KW-0575">Peroxidase</keyword>
<keyword id="KW-0676">Redox-active center</keyword>
<keyword id="KW-1185">Reference proteome</keyword>